<keyword id="KW-0520">NAD</keyword>
<keyword id="KW-0560">Oxidoreductase</keyword>
<keyword id="KW-0816">Tricarboxylic acid cycle</keyword>
<proteinExistence type="inferred from homology"/>
<sequence>MKVAVLGAAGGIGQALALLLKTQLPAGSKLSLYDIAPVTPGVAVDLSHIPTAVEIKGFAGEDPTPALVGADVVLISAGVARKPGMDRSDLFNINAGIVRNLIEKVAATCPKALVGIITNPVNTTVAIAAEVMKKAGVYDKNRLFGVTTLDVIRSETFIAELKGLNVADVKINVIGGHSGVTILPLLSQVEGVTFSDEEVASLTKRIQNAGTEVVEAKAGGGSATLSMGQAACRFGMSLVRGLQGEANVVECAYVDGGSEHAEFFAQPVLLGKNGIEKVLPYGEVSAFEANARDSMLDTLKGDIKLGVDFVK</sequence>
<accession>A1RFX8</accession>
<reference key="1">
    <citation type="submission" date="2006-12" db="EMBL/GenBank/DDBJ databases">
        <title>Complete sequence of Shewanella sp. W3-18-1.</title>
        <authorList>
            <consortium name="US DOE Joint Genome Institute"/>
            <person name="Copeland A."/>
            <person name="Lucas S."/>
            <person name="Lapidus A."/>
            <person name="Barry K."/>
            <person name="Detter J.C."/>
            <person name="Glavina del Rio T."/>
            <person name="Hammon N."/>
            <person name="Israni S."/>
            <person name="Dalin E."/>
            <person name="Tice H."/>
            <person name="Pitluck S."/>
            <person name="Chain P."/>
            <person name="Malfatti S."/>
            <person name="Shin M."/>
            <person name="Vergez L."/>
            <person name="Schmutz J."/>
            <person name="Larimer F."/>
            <person name="Land M."/>
            <person name="Hauser L."/>
            <person name="Kyrpides N."/>
            <person name="Lykidis A."/>
            <person name="Tiedje J."/>
            <person name="Richardson P."/>
        </authorList>
    </citation>
    <scope>NUCLEOTIDE SEQUENCE [LARGE SCALE GENOMIC DNA]</scope>
    <source>
        <strain>W3-18-1</strain>
    </source>
</reference>
<name>MDH_SHESW</name>
<gene>
    <name evidence="1" type="primary">mdh</name>
    <name type="ordered locus">Sputw3181_0722</name>
</gene>
<evidence type="ECO:0000255" key="1">
    <source>
        <dbReference type="HAMAP-Rule" id="MF_01516"/>
    </source>
</evidence>
<dbReference type="EC" id="1.1.1.37" evidence="1"/>
<dbReference type="EMBL" id="CP000503">
    <property type="protein sequence ID" value="ABM23573.1"/>
    <property type="molecule type" value="Genomic_DNA"/>
</dbReference>
<dbReference type="RefSeq" id="WP_011788103.1">
    <property type="nucleotide sequence ID" value="NC_008750.1"/>
</dbReference>
<dbReference type="SMR" id="A1RFX8"/>
<dbReference type="GeneID" id="67444804"/>
<dbReference type="KEGG" id="shw:Sputw3181_0722"/>
<dbReference type="HOGENOM" id="CLU_047181_0_1_6"/>
<dbReference type="Proteomes" id="UP000002597">
    <property type="component" value="Chromosome"/>
</dbReference>
<dbReference type="GO" id="GO:0005737">
    <property type="term" value="C:cytoplasm"/>
    <property type="evidence" value="ECO:0007669"/>
    <property type="project" value="TreeGrafter"/>
</dbReference>
<dbReference type="GO" id="GO:0030060">
    <property type="term" value="F:L-malate dehydrogenase (NAD+) activity"/>
    <property type="evidence" value="ECO:0007669"/>
    <property type="project" value="UniProtKB-UniRule"/>
</dbReference>
<dbReference type="GO" id="GO:0006108">
    <property type="term" value="P:malate metabolic process"/>
    <property type="evidence" value="ECO:0007669"/>
    <property type="project" value="InterPro"/>
</dbReference>
<dbReference type="GO" id="GO:0006099">
    <property type="term" value="P:tricarboxylic acid cycle"/>
    <property type="evidence" value="ECO:0007669"/>
    <property type="project" value="UniProtKB-UniRule"/>
</dbReference>
<dbReference type="CDD" id="cd01337">
    <property type="entry name" value="MDH_glyoxysomal_mitochondrial"/>
    <property type="match status" value="1"/>
</dbReference>
<dbReference type="FunFam" id="3.40.50.720:FF:000017">
    <property type="entry name" value="Malate dehydrogenase"/>
    <property type="match status" value="1"/>
</dbReference>
<dbReference type="FunFam" id="3.90.110.10:FF:000001">
    <property type="entry name" value="Malate dehydrogenase"/>
    <property type="match status" value="1"/>
</dbReference>
<dbReference type="Gene3D" id="3.90.110.10">
    <property type="entry name" value="Lactate dehydrogenase/glycoside hydrolase, family 4, C-terminal"/>
    <property type="match status" value="1"/>
</dbReference>
<dbReference type="Gene3D" id="3.40.50.720">
    <property type="entry name" value="NAD(P)-binding Rossmann-like Domain"/>
    <property type="match status" value="1"/>
</dbReference>
<dbReference type="HAMAP" id="MF_01516">
    <property type="entry name" value="Malate_dehydrog_1"/>
    <property type="match status" value="1"/>
</dbReference>
<dbReference type="InterPro" id="IPR001557">
    <property type="entry name" value="L-lactate/malate_DH"/>
</dbReference>
<dbReference type="InterPro" id="IPR022383">
    <property type="entry name" value="Lactate/malate_DH_C"/>
</dbReference>
<dbReference type="InterPro" id="IPR001236">
    <property type="entry name" value="Lactate/malate_DH_N"/>
</dbReference>
<dbReference type="InterPro" id="IPR015955">
    <property type="entry name" value="Lactate_DH/Glyco_Ohase_4_C"/>
</dbReference>
<dbReference type="InterPro" id="IPR001252">
    <property type="entry name" value="Malate_DH_AS"/>
</dbReference>
<dbReference type="InterPro" id="IPR010097">
    <property type="entry name" value="Malate_DH_type1"/>
</dbReference>
<dbReference type="InterPro" id="IPR023958">
    <property type="entry name" value="Malate_DH_type1_bac"/>
</dbReference>
<dbReference type="InterPro" id="IPR036291">
    <property type="entry name" value="NAD(P)-bd_dom_sf"/>
</dbReference>
<dbReference type="NCBIfam" id="TIGR01772">
    <property type="entry name" value="MDH_euk_gproteo"/>
    <property type="match status" value="1"/>
</dbReference>
<dbReference type="PANTHER" id="PTHR11540">
    <property type="entry name" value="MALATE AND LACTATE DEHYDROGENASE"/>
    <property type="match status" value="1"/>
</dbReference>
<dbReference type="PANTHER" id="PTHR11540:SF16">
    <property type="entry name" value="MALATE DEHYDROGENASE, MITOCHONDRIAL"/>
    <property type="match status" value="1"/>
</dbReference>
<dbReference type="Pfam" id="PF02866">
    <property type="entry name" value="Ldh_1_C"/>
    <property type="match status" value="1"/>
</dbReference>
<dbReference type="Pfam" id="PF00056">
    <property type="entry name" value="Ldh_1_N"/>
    <property type="match status" value="1"/>
</dbReference>
<dbReference type="PIRSF" id="PIRSF000102">
    <property type="entry name" value="Lac_mal_DH"/>
    <property type="match status" value="1"/>
</dbReference>
<dbReference type="SUPFAM" id="SSF56327">
    <property type="entry name" value="LDH C-terminal domain-like"/>
    <property type="match status" value="1"/>
</dbReference>
<dbReference type="SUPFAM" id="SSF51735">
    <property type="entry name" value="NAD(P)-binding Rossmann-fold domains"/>
    <property type="match status" value="1"/>
</dbReference>
<dbReference type="PROSITE" id="PS00068">
    <property type="entry name" value="MDH"/>
    <property type="match status" value="1"/>
</dbReference>
<feature type="chain" id="PRO_0000294307" description="Malate dehydrogenase">
    <location>
        <begin position="1"/>
        <end position="311"/>
    </location>
</feature>
<feature type="active site" description="Proton acceptor" evidence="1">
    <location>
        <position position="177"/>
    </location>
</feature>
<feature type="binding site" evidence="1">
    <location>
        <begin position="7"/>
        <end position="13"/>
    </location>
    <ligand>
        <name>NAD(+)</name>
        <dbReference type="ChEBI" id="CHEBI:57540"/>
    </ligand>
</feature>
<feature type="binding site" evidence="1">
    <location>
        <position position="34"/>
    </location>
    <ligand>
        <name>NAD(+)</name>
        <dbReference type="ChEBI" id="CHEBI:57540"/>
    </ligand>
</feature>
<feature type="binding site" evidence="1">
    <location>
        <position position="81"/>
    </location>
    <ligand>
        <name>substrate</name>
    </ligand>
</feature>
<feature type="binding site" evidence="1">
    <location>
        <position position="87"/>
    </location>
    <ligand>
        <name>substrate</name>
    </ligand>
</feature>
<feature type="binding site" evidence="1">
    <location>
        <position position="94"/>
    </location>
    <ligand>
        <name>NAD(+)</name>
        <dbReference type="ChEBI" id="CHEBI:57540"/>
    </ligand>
</feature>
<feature type="binding site" evidence="1">
    <location>
        <begin position="117"/>
        <end position="119"/>
    </location>
    <ligand>
        <name>NAD(+)</name>
        <dbReference type="ChEBI" id="CHEBI:57540"/>
    </ligand>
</feature>
<feature type="binding site" evidence="1">
    <location>
        <position position="119"/>
    </location>
    <ligand>
        <name>substrate</name>
    </ligand>
</feature>
<feature type="binding site" evidence="1">
    <location>
        <position position="153"/>
    </location>
    <ligand>
        <name>substrate</name>
    </ligand>
</feature>
<feature type="binding site" evidence="1">
    <location>
        <position position="227"/>
    </location>
    <ligand>
        <name>NAD(+)</name>
        <dbReference type="ChEBI" id="CHEBI:57540"/>
    </ligand>
</feature>
<protein>
    <recommendedName>
        <fullName evidence="1">Malate dehydrogenase</fullName>
        <ecNumber evidence="1">1.1.1.37</ecNumber>
    </recommendedName>
</protein>
<organism>
    <name type="scientific">Shewanella sp. (strain W3-18-1)</name>
    <dbReference type="NCBI Taxonomy" id="351745"/>
    <lineage>
        <taxon>Bacteria</taxon>
        <taxon>Pseudomonadati</taxon>
        <taxon>Pseudomonadota</taxon>
        <taxon>Gammaproteobacteria</taxon>
        <taxon>Alteromonadales</taxon>
        <taxon>Shewanellaceae</taxon>
        <taxon>Shewanella</taxon>
    </lineage>
</organism>
<comment type="function">
    <text evidence="1">Catalyzes the reversible oxidation of malate to oxaloacetate.</text>
</comment>
<comment type="catalytic activity">
    <reaction evidence="1">
        <text>(S)-malate + NAD(+) = oxaloacetate + NADH + H(+)</text>
        <dbReference type="Rhea" id="RHEA:21432"/>
        <dbReference type="ChEBI" id="CHEBI:15378"/>
        <dbReference type="ChEBI" id="CHEBI:15589"/>
        <dbReference type="ChEBI" id="CHEBI:16452"/>
        <dbReference type="ChEBI" id="CHEBI:57540"/>
        <dbReference type="ChEBI" id="CHEBI:57945"/>
        <dbReference type="EC" id="1.1.1.37"/>
    </reaction>
</comment>
<comment type="subunit">
    <text evidence="1">Homodimer.</text>
</comment>
<comment type="similarity">
    <text evidence="1">Belongs to the LDH/MDH superfamily. MDH type 1 family.</text>
</comment>